<keyword id="KW-0143">Chaperone</keyword>
<keyword id="KW-0963">Cytoplasm</keyword>
<keyword id="KW-0996">Nickel insertion</keyword>
<keyword id="KW-1185">Reference proteome</keyword>
<reference key="1">
    <citation type="journal article" date="2001" name="DNA Res.">
        <title>Complete genomic sequence of the filamentous nitrogen-fixing cyanobacterium Anabaena sp. strain PCC 7120.</title>
        <authorList>
            <person name="Kaneko T."/>
            <person name="Nakamura Y."/>
            <person name="Wolk C.P."/>
            <person name="Kuritz T."/>
            <person name="Sasamoto S."/>
            <person name="Watanabe A."/>
            <person name="Iriguchi M."/>
            <person name="Ishikawa A."/>
            <person name="Kawashima K."/>
            <person name="Kimura T."/>
            <person name="Kishida Y."/>
            <person name="Kohara M."/>
            <person name="Matsumoto M."/>
            <person name="Matsuno A."/>
            <person name="Muraki A."/>
            <person name="Nakazaki N."/>
            <person name="Shimpo S."/>
            <person name="Sugimoto M."/>
            <person name="Takazawa M."/>
            <person name="Yamada M."/>
            <person name="Yasuda M."/>
            <person name="Tabata S."/>
        </authorList>
    </citation>
    <scope>NUCLEOTIDE SEQUENCE [LARGE SCALE GENOMIC DNA]</scope>
    <source>
        <strain>PCC 7120 / SAG 25.82 / UTEX 2576</strain>
    </source>
</reference>
<accession>Q8YYV9</accession>
<protein>
    <recommendedName>
        <fullName evidence="1">Urease accessory protein UreF</fullName>
    </recommendedName>
</protein>
<sequence length="229" mass="25372">MDTTTLTDHHFLHILQLASSALPVGAYSYSEGLETLVENGTITSQSTLQQWLEAELSYGAIRLEAAVMVRAYQAATMDDMETLCYWNLWLSAARETQELRNSSWQMGRSLMQLLGKIQPEILPLANAVGNPCNYAIAFGIASAHWQINIQAALLAYLHSWATNLITAGVKLIPLGQTAGQELLLQLQPLISHATVEIMSLKDDELSCCSWGLSLASMQHETQYTRLFRS</sequence>
<comment type="function">
    <text evidence="1">Required for maturation of urease via the functional incorporation of the urease nickel metallocenter.</text>
</comment>
<comment type="subunit">
    <text evidence="1">UreD, UreF and UreG form a complex that acts as a GTP-hydrolysis-dependent molecular chaperone, activating the urease apoprotein by helping to assemble the nickel containing metallocenter of UreC. The UreE protein probably delivers the nickel.</text>
</comment>
<comment type="subcellular location">
    <subcellularLocation>
        <location evidence="1">Cytoplasm</location>
    </subcellularLocation>
</comment>
<comment type="similarity">
    <text evidence="1">Belongs to the UreF family.</text>
</comment>
<comment type="sequence caution" evidence="2">
    <conflict type="erroneous initiation">
        <sequence resource="EMBL-CDS" id="BAB72691"/>
    </conflict>
</comment>
<dbReference type="EMBL" id="BA000019">
    <property type="protein sequence ID" value="BAB72691.1"/>
    <property type="status" value="ALT_INIT"/>
    <property type="molecule type" value="Genomic_DNA"/>
</dbReference>
<dbReference type="PIR" id="AD1898">
    <property type="entry name" value="AD1898"/>
</dbReference>
<dbReference type="RefSeq" id="WP_044520711.1">
    <property type="nucleotide sequence ID" value="NZ_RSCN01000006.1"/>
</dbReference>
<dbReference type="SMR" id="Q8YYV9"/>
<dbReference type="STRING" id="103690.gene:10492744"/>
<dbReference type="KEGG" id="ana:alr0734"/>
<dbReference type="eggNOG" id="COG0830">
    <property type="taxonomic scope" value="Bacteria"/>
</dbReference>
<dbReference type="OrthoDB" id="9798772at2"/>
<dbReference type="Proteomes" id="UP000002483">
    <property type="component" value="Chromosome"/>
</dbReference>
<dbReference type="GO" id="GO:0005737">
    <property type="term" value="C:cytoplasm"/>
    <property type="evidence" value="ECO:0007669"/>
    <property type="project" value="UniProtKB-SubCell"/>
</dbReference>
<dbReference type="GO" id="GO:0016151">
    <property type="term" value="F:nickel cation binding"/>
    <property type="evidence" value="ECO:0007669"/>
    <property type="project" value="UniProtKB-UniRule"/>
</dbReference>
<dbReference type="Gene3D" id="1.10.4190.10">
    <property type="entry name" value="Urease accessory protein UreF"/>
    <property type="match status" value="1"/>
</dbReference>
<dbReference type="HAMAP" id="MF_01385">
    <property type="entry name" value="UreF"/>
    <property type="match status" value="1"/>
</dbReference>
<dbReference type="InterPro" id="IPR002639">
    <property type="entry name" value="UreF"/>
</dbReference>
<dbReference type="InterPro" id="IPR038277">
    <property type="entry name" value="UreF_sf"/>
</dbReference>
<dbReference type="PANTHER" id="PTHR33620">
    <property type="entry name" value="UREASE ACCESSORY PROTEIN F"/>
    <property type="match status" value="1"/>
</dbReference>
<dbReference type="PANTHER" id="PTHR33620:SF1">
    <property type="entry name" value="UREASE ACCESSORY PROTEIN F"/>
    <property type="match status" value="1"/>
</dbReference>
<dbReference type="Pfam" id="PF01730">
    <property type="entry name" value="UreF"/>
    <property type="match status" value="1"/>
</dbReference>
<dbReference type="PIRSF" id="PIRSF009467">
    <property type="entry name" value="Ureas_acces_UreF"/>
    <property type="match status" value="1"/>
</dbReference>
<feature type="chain" id="PRO_0000344070" description="Urease accessory protein UreF">
    <location>
        <begin position="1"/>
        <end position="229"/>
    </location>
</feature>
<gene>
    <name evidence="1" type="primary">ureF</name>
    <name type="ordered locus">alr0734</name>
</gene>
<proteinExistence type="inferred from homology"/>
<name>UREF_NOSS1</name>
<organism>
    <name type="scientific">Nostoc sp. (strain PCC 7120 / SAG 25.82 / UTEX 2576)</name>
    <dbReference type="NCBI Taxonomy" id="103690"/>
    <lineage>
        <taxon>Bacteria</taxon>
        <taxon>Bacillati</taxon>
        <taxon>Cyanobacteriota</taxon>
        <taxon>Cyanophyceae</taxon>
        <taxon>Nostocales</taxon>
        <taxon>Nostocaceae</taxon>
        <taxon>Nostoc</taxon>
    </lineage>
</organism>
<evidence type="ECO:0000255" key="1">
    <source>
        <dbReference type="HAMAP-Rule" id="MF_01385"/>
    </source>
</evidence>
<evidence type="ECO:0000305" key="2"/>